<feature type="chain" id="PRO_0000342319" description="Uncharacterized protein 81">
    <location>
        <begin position="1"/>
        <end position="81"/>
    </location>
</feature>
<organism>
    <name type="scientific">Sulfolobus islandicus rod-shaped virus 1</name>
    <name type="common">SIRV-1</name>
    <name type="synonym">Sulfolobus virus SIRV-1</name>
    <dbReference type="NCBI Taxonomy" id="157898"/>
    <lineage>
        <taxon>Viruses</taxon>
        <taxon>Adnaviria</taxon>
        <taxon>Zilligvirae</taxon>
        <taxon>Taleaviricota</taxon>
        <taxon>Tokiviricetes</taxon>
        <taxon>Ligamenvirales</taxon>
        <taxon>Rudiviridae</taxon>
        <taxon>Icerudivirus</taxon>
        <taxon>Icerudivirus SIRV1</taxon>
    </lineage>
</organism>
<accession>Q8QL41</accession>
<proteinExistence type="predicted"/>
<reference key="1">
    <citation type="journal article" date="2001" name="Virology">
        <title>Sequences and replication of genomes of the archaeal rudiviruses SIRV1 and SIRV2: relationships to the archaeal lipothrixvirus SIFV and some eukaryal viruses.</title>
        <authorList>
            <person name="Peng X."/>
            <person name="Blum H."/>
            <person name="She Q."/>
            <person name="Mallok S."/>
            <person name="Bruegger K."/>
            <person name="Garrett R.A."/>
            <person name="Zillig W."/>
            <person name="Prangishvili D."/>
        </authorList>
    </citation>
    <scope>NUCLEOTIDE SEQUENCE [LARGE SCALE GENOMIC DNA]</scope>
    <source>
        <strain>Isolate variant VIII</strain>
    </source>
</reference>
<gene>
    <name type="ORF">81</name>
</gene>
<keyword id="KW-1185">Reference proteome</keyword>
<name>Y81_SIRV1</name>
<sequence length="81" mass="9380">MSSQEEIIKTLNKKDIKDIITKNISFLVEPQILFYAKKRNRIVGYLEVNGRHYRFELIFSKDNSVSITIGELVVFGSSDLK</sequence>
<dbReference type="EMBL" id="AJ414696">
    <property type="protein sequence ID" value="CAC93968.1"/>
    <property type="molecule type" value="Genomic_DNA"/>
</dbReference>
<dbReference type="RefSeq" id="NP_666601.1">
    <property type="nucleotide sequence ID" value="NC_004087.1"/>
</dbReference>
<dbReference type="SMR" id="Q8QL41"/>
<dbReference type="KEGG" id="vg:951395"/>
<dbReference type="Proteomes" id="UP000002270">
    <property type="component" value="Genome"/>
</dbReference>
<organismHost>
    <name type="scientific">Saccharolobus islandicus</name>
    <name type="common">Sulfolobus islandicus</name>
    <dbReference type="NCBI Taxonomy" id="43080"/>
</organismHost>
<protein>
    <recommendedName>
        <fullName>Uncharacterized protein 81</fullName>
    </recommendedName>
</protein>